<sequence>MTTDVRILGIDPGLRRTGWGLITARGSKLSYLACGVVTSDGDLPLALRLRELHEGLTRIVTTYTPDEVSVEETFVNKDAQATLKLGHARAVALLVPALAGLPVAEYAANLVKKTVAGNGHAEKVQIQAMVKFLLPKAEFKLADAADALAIAITHASHRGAIALDRRHAVAAGGGPGAARIAAALARLDR</sequence>
<evidence type="ECO:0000255" key="1">
    <source>
        <dbReference type="HAMAP-Rule" id="MF_00034"/>
    </source>
</evidence>
<keyword id="KW-0963">Cytoplasm</keyword>
<keyword id="KW-0227">DNA damage</keyword>
<keyword id="KW-0233">DNA recombination</keyword>
<keyword id="KW-0234">DNA repair</keyword>
<keyword id="KW-0238">DNA-binding</keyword>
<keyword id="KW-0255">Endonuclease</keyword>
<keyword id="KW-0378">Hydrolase</keyword>
<keyword id="KW-0460">Magnesium</keyword>
<keyword id="KW-0479">Metal-binding</keyword>
<keyword id="KW-0540">Nuclease</keyword>
<feature type="chain" id="PRO_1000090536" description="Crossover junction endodeoxyribonuclease RuvC">
    <location>
        <begin position="1"/>
        <end position="189"/>
    </location>
</feature>
<feature type="active site" evidence="1">
    <location>
        <position position="11"/>
    </location>
</feature>
<feature type="active site" evidence="1">
    <location>
        <position position="71"/>
    </location>
</feature>
<feature type="active site" evidence="1">
    <location>
        <position position="143"/>
    </location>
</feature>
<feature type="binding site" evidence="1">
    <location>
        <position position="11"/>
    </location>
    <ligand>
        <name>Mg(2+)</name>
        <dbReference type="ChEBI" id="CHEBI:18420"/>
        <label>1</label>
    </ligand>
</feature>
<feature type="binding site" evidence="1">
    <location>
        <position position="71"/>
    </location>
    <ligand>
        <name>Mg(2+)</name>
        <dbReference type="ChEBI" id="CHEBI:18420"/>
        <label>2</label>
    </ligand>
</feature>
<feature type="binding site" evidence="1">
    <location>
        <position position="143"/>
    </location>
    <ligand>
        <name>Mg(2+)</name>
        <dbReference type="ChEBI" id="CHEBI:18420"/>
        <label>1</label>
    </ligand>
</feature>
<protein>
    <recommendedName>
        <fullName evidence="1">Crossover junction endodeoxyribonuclease RuvC</fullName>
        <ecNumber evidence="1">3.1.21.10</ecNumber>
    </recommendedName>
    <alternativeName>
        <fullName evidence="1">Holliday junction nuclease RuvC</fullName>
    </alternativeName>
    <alternativeName>
        <fullName evidence="1">Holliday junction resolvase RuvC</fullName>
    </alternativeName>
</protein>
<accession>A9W1B1</accession>
<dbReference type="EC" id="3.1.21.10" evidence="1"/>
<dbReference type="EMBL" id="CP000908">
    <property type="protein sequence ID" value="ABY29367.1"/>
    <property type="molecule type" value="Genomic_DNA"/>
</dbReference>
<dbReference type="RefSeq" id="WP_003599946.1">
    <property type="nucleotide sequence ID" value="NC_010172.1"/>
</dbReference>
<dbReference type="SMR" id="A9W1B1"/>
<dbReference type="KEGG" id="mex:Mext_0962"/>
<dbReference type="eggNOG" id="COG0817">
    <property type="taxonomic scope" value="Bacteria"/>
</dbReference>
<dbReference type="HOGENOM" id="CLU_091257_1_0_5"/>
<dbReference type="BioCyc" id="MEXT419610:MEXT_RS04780-MONOMER"/>
<dbReference type="GO" id="GO:0005737">
    <property type="term" value="C:cytoplasm"/>
    <property type="evidence" value="ECO:0007669"/>
    <property type="project" value="UniProtKB-SubCell"/>
</dbReference>
<dbReference type="GO" id="GO:0048476">
    <property type="term" value="C:Holliday junction resolvase complex"/>
    <property type="evidence" value="ECO:0007669"/>
    <property type="project" value="UniProtKB-UniRule"/>
</dbReference>
<dbReference type="GO" id="GO:0008821">
    <property type="term" value="F:crossover junction DNA endonuclease activity"/>
    <property type="evidence" value="ECO:0007669"/>
    <property type="project" value="UniProtKB-UniRule"/>
</dbReference>
<dbReference type="GO" id="GO:0003677">
    <property type="term" value="F:DNA binding"/>
    <property type="evidence" value="ECO:0007669"/>
    <property type="project" value="UniProtKB-KW"/>
</dbReference>
<dbReference type="GO" id="GO:0000287">
    <property type="term" value="F:magnesium ion binding"/>
    <property type="evidence" value="ECO:0007669"/>
    <property type="project" value="UniProtKB-UniRule"/>
</dbReference>
<dbReference type="GO" id="GO:0006310">
    <property type="term" value="P:DNA recombination"/>
    <property type="evidence" value="ECO:0007669"/>
    <property type="project" value="UniProtKB-UniRule"/>
</dbReference>
<dbReference type="GO" id="GO:0006281">
    <property type="term" value="P:DNA repair"/>
    <property type="evidence" value="ECO:0007669"/>
    <property type="project" value="UniProtKB-UniRule"/>
</dbReference>
<dbReference type="CDD" id="cd16962">
    <property type="entry name" value="RuvC"/>
    <property type="match status" value="1"/>
</dbReference>
<dbReference type="FunFam" id="3.30.420.10:FF:000002">
    <property type="entry name" value="Crossover junction endodeoxyribonuclease RuvC"/>
    <property type="match status" value="1"/>
</dbReference>
<dbReference type="Gene3D" id="3.30.420.10">
    <property type="entry name" value="Ribonuclease H-like superfamily/Ribonuclease H"/>
    <property type="match status" value="1"/>
</dbReference>
<dbReference type="HAMAP" id="MF_00034">
    <property type="entry name" value="RuvC"/>
    <property type="match status" value="1"/>
</dbReference>
<dbReference type="InterPro" id="IPR012337">
    <property type="entry name" value="RNaseH-like_sf"/>
</dbReference>
<dbReference type="InterPro" id="IPR036397">
    <property type="entry name" value="RNaseH_sf"/>
</dbReference>
<dbReference type="InterPro" id="IPR020563">
    <property type="entry name" value="X-over_junc_endoDNase_Mg_BS"/>
</dbReference>
<dbReference type="InterPro" id="IPR002176">
    <property type="entry name" value="X-over_junc_endoDNase_RuvC"/>
</dbReference>
<dbReference type="NCBIfam" id="TIGR00228">
    <property type="entry name" value="ruvC"/>
    <property type="match status" value="1"/>
</dbReference>
<dbReference type="PANTHER" id="PTHR30194">
    <property type="entry name" value="CROSSOVER JUNCTION ENDODEOXYRIBONUCLEASE RUVC"/>
    <property type="match status" value="1"/>
</dbReference>
<dbReference type="PANTHER" id="PTHR30194:SF3">
    <property type="entry name" value="CROSSOVER JUNCTION ENDODEOXYRIBONUCLEASE RUVC"/>
    <property type="match status" value="1"/>
</dbReference>
<dbReference type="Pfam" id="PF02075">
    <property type="entry name" value="RuvC"/>
    <property type="match status" value="1"/>
</dbReference>
<dbReference type="PRINTS" id="PR00696">
    <property type="entry name" value="RSOLVASERUVC"/>
</dbReference>
<dbReference type="SUPFAM" id="SSF53098">
    <property type="entry name" value="Ribonuclease H-like"/>
    <property type="match status" value="1"/>
</dbReference>
<dbReference type="PROSITE" id="PS01321">
    <property type="entry name" value="RUVC"/>
    <property type="match status" value="1"/>
</dbReference>
<organism>
    <name type="scientific">Methylorubrum extorquens (strain PA1)</name>
    <name type="common">Methylobacterium extorquens</name>
    <dbReference type="NCBI Taxonomy" id="419610"/>
    <lineage>
        <taxon>Bacteria</taxon>
        <taxon>Pseudomonadati</taxon>
        <taxon>Pseudomonadota</taxon>
        <taxon>Alphaproteobacteria</taxon>
        <taxon>Hyphomicrobiales</taxon>
        <taxon>Methylobacteriaceae</taxon>
        <taxon>Methylorubrum</taxon>
    </lineage>
</organism>
<name>RUVC_METEP</name>
<reference key="1">
    <citation type="submission" date="2007-12" db="EMBL/GenBank/DDBJ databases">
        <title>Complete sequence of Methylobacterium extorquens PA1.</title>
        <authorList>
            <consortium name="US DOE Joint Genome Institute"/>
            <person name="Copeland A."/>
            <person name="Lucas S."/>
            <person name="Lapidus A."/>
            <person name="Barry K."/>
            <person name="Glavina del Rio T."/>
            <person name="Dalin E."/>
            <person name="Tice H."/>
            <person name="Pitluck S."/>
            <person name="Saunders E."/>
            <person name="Brettin T."/>
            <person name="Bruce D."/>
            <person name="Detter J.C."/>
            <person name="Han C."/>
            <person name="Schmutz J."/>
            <person name="Larimer F."/>
            <person name="Land M."/>
            <person name="Hauser L."/>
            <person name="Kyrpides N."/>
            <person name="Kim E."/>
            <person name="Marx C."/>
            <person name="Richardson P."/>
        </authorList>
    </citation>
    <scope>NUCLEOTIDE SEQUENCE [LARGE SCALE GENOMIC DNA]</scope>
    <source>
        <strain>PA1</strain>
    </source>
</reference>
<gene>
    <name evidence="1" type="primary">ruvC</name>
    <name type="ordered locus">Mext_0962</name>
</gene>
<comment type="function">
    <text evidence="1">The RuvA-RuvB-RuvC complex processes Holliday junction (HJ) DNA during genetic recombination and DNA repair. Endonuclease that resolves HJ intermediates. Cleaves cruciform DNA by making single-stranded nicks across the HJ at symmetrical positions within the homologous arms, yielding a 5'-phosphate and a 3'-hydroxyl group; requires a central core of homology in the junction. The consensus cleavage sequence is 5'-(A/T)TT(C/G)-3'. Cleavage occurs on the 3'-side of the TT dinucleotide at the point of strand exchange. HJ branch migration catalyzed by RuvA-RuvB allows RuvC to scan DNA until it finds its consensus sequence, where it cleaves and resolves the cruciform DNA.</text>
</comment>
<comment type="catalytic activity">
    <reaction evidence="1">
        <text>Endonucleolytic cleavage at a junction such as a reciprocal single-stranded crossover between two homologous DNA duplexes (Holliday junction).</text>
        <dbReference type="EC" id="3.1.21.10"/>
    </reaction>
</comment>
<comment type="cofactor">
    <cofactor evidence="1">
        <name>Mg(2+)</name>
        <dbReference type="ChEBI" id="CHEBI:18420"/>
    </cofactor>
    <text evidence="1">Binds 2 Mg(2+) ion per subunit.</text>
</comment>
<comment type="subunit">
    <text evidence="1">Homodimer which binds Holliday junction (HJ) DNA. The HJ becomes 2-fold symmetrical on binding to RuvC with unstacked arms; it has a different conformation from HJ DNA in complex with RuvA. In the full resolvosome a probable DNA-RuvA(4)-RuvB(12)-RuvC(2) complex forms which resolves the HJ.</text>
</comment>
<comment type="subcellular location">
    <subcellularLocation>
        <location evidence="1">Cytoplasm</location>
    </subcellularLocation>
</comment>
<comment type="similarity">
    <text evidence="1">Belongs to the RuvC family.</text>
</comment>
<proteinExistence type="inferred from homology"/>